<comment type="catalytic activity">
    <reaction>
        <text>Endohydrolysis of (1-&gt;4)-beta-D-glucosidic linkages in cellulose, lichenin and cereal beta-D-glucans.</text>
        <dbReference type="EC" id="3.2.1.4"/>
    </reaction>
</comment>
<comment type="subcellular location">
    <subcellularLocation>
        <location evidence="1">Cell membrane</location>
        <topology evidence="1">Lipid-anchor</topology>
    </subcellularLocation>
</comment>
<comment type="similarity">
    <text evidence="1">Belongs to the glycosyl hydrolase 5 (cellulase A) family.</text>
</comment>
<sequence>SLQAATEWLKANNQRGFLGEMGAGSNAD</sequence>
<proteinExistence type="evidence at protein level"/>
<feature type="chain" id="PRO_0000184053" description="Endoglucanase">
    <location>
        <begin position="1"/>
        <end position="28" status="greater than"/>
    </location>
</feature>
<feature type="active site" description="Nucleophile">
    <location>
        <position position="20"/>
    </location>
</feature>
<feature type="non-terminal residue">
    <location>
        <position position="28"/>
    </location>
</feature>
<dbReference type="EC" id="3.2.1.4"/>
<dbReference type="SMR" id="P81190"/>
<dbReference type="CAZy" id="GH5">
    <property type="family name" value="Glycoside Hydrolase Family 5"/>
</dbReference>
<dbReference type="GO" id="GO:0005886">
    <property type="term" value="C:plasma membrane"/>
    <property type="evidence" value="ECO:0007669"/>
    <property type="project" value="UniProtKB-SubCell"/>
</dbReference>
<dbReference type="GO" id="GO:0008810">
    <property type="term" value="F:cellulase activity"/>
    <property type="evidence" value="ECO:0007669"/>
    <property type="project" value="UniProtKB-EC"/>
</dbReference>
<dbReference type="GO" id="GO:0030245">
    <property type="term" value="P:cellulose catabolic process"/>
    <property type="evidence" value="ECO:0007669"/>
    <property type="project" value="UniProtKB-KW"/>
</dbReference>
<keyword id="KW-0119">Carbohydrate metabolism</keyword>
<keyword id="KW-1003">Cell membrane</keyword>
<keyword id="KW-0136">Cellulose degradation</keyword>
<keyword id="KW-0903">Direct protein sequencing</keyword>
<keyword id="KW-0326">Glycosidase</keyword>
<keyword id="KW-0378">Hydrolase</keyword>
<keyword id="KW-0449">Lipoprotein</keyword>
<keyword id="KW-0472">Membrane</keyword>
<keyword id="KW-0624">Polysaccharide degradation</keyword>
<keyword id="KW-0865">Zymogen</keyword>
<protein>
    <recommendedName>
        <fullName>Endoglucanase</fullName>
        <ecNumber>3.2.1.4</ecNumber>
    </recommendedName>
    <alternativeName>
        <fullName>Cellulase</fullName>
    </alternativeName>
    <alternativeName>
        <fullName>Endo-1,4-beta-glucanase</fullName>
    </alternativeName>
</protein>
<organism>
    <name type="scientific">Schizophyllum commune</name>
    <name type="common">Split gill fungus</name>
    <dbReference type="NCBI Taxonomy" id="5334"/>
    <lineage>
        <taxon>Eukaryota</taxon>
        <taxon>Fungi</taxon>
        <taxon>Dikarya</taxon>
        <taxon>Basidiomycota</taxon>
        <taxon>Agaricomycotina</taxon>
        <taxon>Agaricomycetes</taxon>
        <taxon>Agaricomycetidae</taxon>
        <taxon>Agaricales</taxon>
        <taxon>Schizophyllaceae</taxon>
        <taxon>Schizophyllum</taxon>
    </lineage>
</organism>
<evidence type="ECO:0000305" key="1"/>
<reference key="1">
    <citation type="journal article" date="1997" name="FEBS Lett.">
        <title>Identification of the catalytic nucleophile in the cellulase from Schizophyllum commune and assignment of the enzyme to family 5, subtype 5 of the glycosidases.</title>
        <authorList>
            <person name="Clarke A.J."/>
            <person name="Drummelsmith J."/>
            <person name="Yaguchi M."/>
        </authorList>
    </citation>
    <scope>PROTEIN SEQUENCE</scope>
</reference>
<accession>P81190</accession>
<name>GUN_SCHCO</name>